<name>CP51A_ASPFN</name>
<keyword id="KW-0256">Endoplasmic reticulum</keyword>
<keyword id="KW-0325">Glycoprotein</keyword>
<keyword id="KW-0349">Heme</keyword>
<keyword id="KW-0408">Iron</keyword>
<keyword id="KW-0472">Membrane</keyword>
<keyword id="KW-0479">Metal-binding</keyword>
<keyword id="KW-0489">Methyltransferase</keyword>
<keyword id="KW-0503">Monooxygenase</keyword>
<keyword id="KW-0560">Oxidoreductase</keyword>
<keyword id="KW-0808">Transferase</keyword>
<keyword id="KW-0812">Transmembrane</keyword>
<keyword id="KW-1133">Transmembrane helix</keyword>
<accession>B8N2C8</accession>
<reference key="1">
    <citation type="journal article" date="2015" name="Genome Announc.">
        <title>Genome sequence of Aspergillus flavus NRRL 3357, a strain that causes aflatoxin contamination of food and feed.</title>
        <authorList>
            <person name="Nierman W.C."/>
            <person name="Yu J."/>
            <person name="Fedorova-Abrams N.D."/>
            <person name="Losada L."/>
            <person name="Cleveland T.E."/>
            <person name="Bhatnagar D."/>
            <person name="Bennett J.W."/>
            <person name="Dean R."/>
            <person name="Payne G.A."/>
        </authorList>
    </citation>
    <scope>NUCLEOTIDE SEQUENCE [LARGE SCALE GENOMIC DNA]</scope>
    <source>
        <strain>ATCC 200026 / FGSC A1120 / IAM 13836 / NRRL 3357 / JCM 12722 / SRRC 167</strain>
    </source>
</reference>
<reference key="2">
    <citation type="journal article" date="2008" name="Int. J. Antimicrob. Agents">
        <title>Molecular characterisation of cyp51A and cyp51B genes coding for P450 14alpha-lanosterol demethylases A (CYP51Ap) and B (CYP51Bp) from voriconazole-resistant laboratory isolates of Aspergillus flavus.</title>
        <authorList>
            <person name="Krishnan-Natesan S."/>
            <person name="Chandrasekar P.H."/>
            <person name="Alangaden G.J."/>
            <person name="Manavathu E.K."/>
        </authorList>
    </citation>
    <scope>FUNCTION</scope>
    <scope>MUTAGENESIS OF TYR-72; LYS-137 AND THR-469</scope>
</reference>
<reference key="3">
    <citation type="journal article" date="2018" name="Antimicrob. Agents Chemother.">
        <title>Investigation of multiple resistance mechanisms in voriconazole-resistant Aspergillus flavus clinical isolates from a chest hospital surveillance in Delhi, India.</title>
        <authorList>
            <person name="Sharma C."/>
            <person name="Kumar R."/>
            <person name="Kumar N."/>
            <person name="Masih A."/>
            <person name="Gupta D."/>
            <person name="Chowdhary A."/>
        </authorList>
    </citation>
    <scope>FUNCTION</scope>
    <scope>INDUCTION</scope>
</reference>
<organism>
    <name type="scientific">Aspergillus flavus (strain ATCC 200026 / FGSC A1120 / IAM 13836 / NRRL 3357 / JCM 12722 / SRRC 167)</name>
    <dbReference type="NCBI Taxonomy" id="332952"/>
    <lineage>
        <taxon>Eukaryota</taxon>
        <taxon>Fungi</taxon>
        <taxon>Dikarya</taxon>
        <taxon>Ascomycota</taxon>
        <taxon>Pezizomycotina</taxon>
        <taxon>Eurotiomycetes</taxon>
        <taxon>Eurotiomycetidae</taxon>
        <taxon>Eurotiales</taxon>
        <taxon>Aspergillaceae</taxon>
        <taxon>Aspergillus</taxon>
        <taxon>Aspergillus subgen. Circumdati</taxon>
    </lineage>
</organism>
<sequence>MIFSRSMASFTLVSAYAAAGLLAIIVLNLLRQLLFRNKTDPPLVFHWIPFLGSTVTYGMDPYAFFFSCRQKYGDIFTFILLGRKITVYLGIQGNEFILNGKLKDVNAEEIYSPLTTPVFGSDIVYDCPNSKLMEQKKFIKFGLTQAALESHVPLIEKEVLDYLKTSPNFKGTSGRVEITDAMAEITIFTAGRALQGEEVRKKLTAEFADLYHDLDRGFTPINFMLPWAPLPRNRKRDAAHARMREIYMDIINERRKNPDRETSDMIWNLMHCTYKNGQPLPDKEIAHMMITLLMAGQHSSSSISSWIMLRLASEPAVMEELYQEQITKLSPDGRTLPPLQYRDLDLLPLHQNLIKETLRLHLSIHSLMRKVKNPMPVPGTPYVVPADHVLLASPGVTALSDEYFPNASRWDPHRWENRVEKEDEEDIVDYGYGTVSKGTSSPYLPFGAGRHRCIGEKFAYVNLGVIVATMARHMKLFNVDGKKGVPATDYSSMFSGPSKPAIIGWERRFPEKS</sequence>
<dbReference type="EC" id="1.14.14.154" evidence="11"/>
<dbReference type="EMBL" id="EQ963473">
    <property type="protein sequence ID" value="EED56341.1"/>
    <property type="molecule type" value="Genomic_DNA"/>
</dbReference>
<dbReference type="RefSeq" id="XP_002375123.1">
    <property type="nucleotide sequence ID" value="XM_002375082.1"/>
</dbReference>
<dbReference type="SMR" id="B8N2C8"/>
<dbReference type="STRING" id="332952.B8N2C8"/>
<dbReference type="GlyCosmos" id="B8N2C8">
    <property type="glycosylation" value="2 sites, No reported glycans"/>
</dbReference>
<dbReference type="EnsemblFungi" id="EED56341">
    <property type="protein sequence ID" value="EED56341"/>
    <property type="gene ID" value="AFLA_036130"/>
</dbReference>
<dbReference type="VEuPathDB" id="FungiDB:AFLA_001488"/>
<dbReference type="eggNOG" id="KOG0684">
    <property type="taxonomic scope" value="Eukaryota"/>
</dbReference>
<dbReference type="HOGENOM" id="CLU_001570_15_0_1"/>
<dbReference type="OMA" id="FPNPLEW"/>
<dbReference type="UniPathway" id="UPA00766"/>
<dbReference type="GO" id="GO:0005789">
    <property type="term" value="C:endoplasmic reticulum membrane"/>
    <property type="evidence" value="ECO:0007669"/>
    <property type="project" value="UniProtKB-SubCell"/>
</dbReference>
<dbReference type="GO" id="GO:0020037">
    <property type="term" value="F:heme binding"/>
    <property type="evidence" value="ECO:0007669"/>
    <property type="project" value="InterPro"/>
</dbReference>
<dbReference type="GO" id="GO:0005506">
    <property type="term" value="F:iron ion binding"/>
    <property type="evidence" value="ECO:0007669"/>
    <property type="project" value="InterPro"/>
</dbReference>
<dbReference type="GO" id="GO:0008168">
    <property type="term" value="F:methyltransferase activity"/>
    <property type="evidence" value="ECO:0007669"/>
    <property type="project" value="UniProtKB-KW"/>
</dbReference>
<dbReference type="GO" id="GO:0008398">
    <property type="term" value="F:sterol 14-demethylase activity"/>
    <property type="evidence" value="ECO:0000304"/>
    <property type="project" value="PHI-base"/>
</dbReference>
<dbReference type="GO" id="GO:0032259">
    <property type="term" value="P:methylation"/>
    <property type="evidence" value="ECO:0007669"/>
    <property type="project" value="UniProtKB-KW"/>
</dbReference>
<dbReference type="GO" id="GO:0016126">
    <property type="term" value="P:sterol biosynthetic process"/>
    <property type="evidence" value="ECO:0007669"/>
    <property type="project" value="UniProtKB-UniPathway"/>
</dbReference>
<dbReference type="CDD" id="cd11042">
    <property type="entry name" value="CYP51-like"/>
    <property type="match status" value="1"/>
</dbReference>
<dbReference type="FunFam" id="1.10.630.10:FF:000033">
    <property type="entry name" value="14-alpha sterol demethylase"/>
    <property type="match status" value="1"/>
</dbReference>
<dbReference type="Gene3D" id="1.10.630.10">
    <property type="entry name" value="Cytochrome P450"/>
    <property type="match status" value="1"/>
</dbReference>
<dbReference type="InterPro" id="IPR050529">
    <property type="entry name" value="CYP450_sterol_14alpha_dmase"/>
</dbReference>
<dbReference type="InterPro" id="IPR001128">
    <property type="entry name" value="Cyt_P450"/>
</dbReference>
<dbReference type="InterPro" id="IPR017972">
    <property type="entry name" value="Cyt_P450_CS"/>
</dbReference>
<dbReference type="InterPro" id="IPR002403">
    <property type="entry name" value="Cyt_P450_E_grp-IV"/>
</dbReference>
<dbReference type="InterPro" id="IPR036396">
    <property type="entry name" value="Cyt_P450_sf"/>
</dbReference>
<dbReference type="PANTHER" id="PTHR24304:SF2">
    <property type="entry name" value="24-HYDROXYCHOLESTEROL 7-ALPHA-HYDROXYLASE"/>
    <property type="match status" value="1"/>
</dbReference>
<dbReference type="PANTHER" id="PTHR24304">
    <property type="entry name" value="CYTOCHROME P450 FAMILY 7"/>
    <property type="match status" value="1"/>
</dbReference>
<dbReference type="Pfam" id="PF00067">
    <property type="entry name" value="p450"/>
    <property type="match status" value="1"/>
</dbReference>
<dbReference type="PRINTS" id="PR00465">
    <property type="entry name" value="EP450IV"/>
</dbReference>
<dbReference type="PRINTS" id="PR00385">
    <property type="entry name" value="P450"/>
</dbReference>
<dbReference type="SUPFAM" id="SSF48264">
    <property type="entry name" value="Cytochrome P450"/>
    <property type="match status" value="1"/>
</dbReference>
<dbReference type="PROSITE" id="PS00086">
    <property type="entry name" value="CYTOCHROME_P450"/>
    <property type="match status" value="1"/>
</dbReference>
<gene>
    <name evidence="9" type="primary">cyp51A</name>
    <name type="ORF">AFLA_036130</name>
</gene>
<feature type="chain" id="PRO_0000448945" description="Sterol 14-alpha demethylase">
    <location>
        <begin position="1"/>
        <end position="513"/>
    </location>
</feature>
<feature type="transmembrane region" description="Helical" evidence="5">
    <location>
        <begin position="10"/>
        <end position="30"/>
    </location>
</feature>
<feature type="binding site" description="axial binding residue" evidence="3">
    <location>
        <position position="453"/>
    </location>
    <ligand>
        <name>heme</name>
        <dbReference type="ChEBI" id="CHEBI:30413"/>
    </ligand>
    <ligandPart>
        <name>Fe</name>
        <dbReference type="ChEBI" id="CHEBI:18248"/>
    </ligandPart>
</feature>
<feature type="glycosylation site" description="N-linked (GlcNAc...) asparagine" evidence="6">
    <location>
        <position position="37"/>
    </location>
</feature>
<feature type="glycosylation site" description="N-linked (GlcNAc...) asparagine" evidence="6">
    <location>
        <position position="406"/>
    </location>
</feature>
<feature type="mutagenesis site" description="Leads to resistance to voriconazole; when associated with S-469." evidence="7">
    <original>Y</original>
    <variation>N</variation>
    <location>
        <position position="72"/>
    </location>
</feature>
<feature type="mutagenesis site" description="Leads to resistance to voriconazole." evidence="7">
    <original>K</original>
    <variation>N</variation>
    <location>
        <position position="137"/>
    </location>
</feature>
<feature type="mutagenesis site" description="Leads to resistance to voriconazole; when associated with N-72." evidence="7">
    <original>T</original>
    <variation>S</variation>
    <location>
        <position position="469"/>
    </location>
</feature>
<comment type="function">
    <text evidence="1 2 4">Sterol 14alpha-demethylase, encoded by cyp51A, cyp51B and cyp51C, that plays a critical role in the third module of ergosterol biosynthesis pathway, being ergosterol the major sterol component in fungal membranes that participates in a variety of functions (By similarity). The third module or late pathway involves the ergosterol synthesis itself through consecutive reactions that mainly occur in the endoplasmic reticulum (ER) membrane (By similarity). In filamentous fungi, during the initial step of this module, lanosterol (lanosta-8,24-dien-3beta-ol) can be metabolized to eburicol (By similarity). Sterol 14alpha-demethylase catalyzes the three-step oxidative removal of the 14alpha-methyl group (C-32) of both these sterols in the form of formate, and converts eburicol and lanosterol to 14-demethyleburicol (4,4,24-trimethylergosta-8,14,24(28)-trienol) and 4,4-dimethyl-5alpha-cholesta-8,14,24-trien-3beta-ol, respectively, which are further metabolized by other enzymes in the pathway to ergosterol (By similarity). Can also use substrates not intrinsic to fungi, such as 24,25-dihydrolanosterol (DHL), producing 4,4'-dimethyl-8,14-cholestadien-3-beta-ol, but at lower rates than the endogenous substrates (By similarity).</text>
</comment>
<comment type="function">
    <text evidence="7 8">As a target of azole drugs, plays a crucial role in azole susceptibility (PubMed:18775650, PubMed:29311090).</text>
</comment>
<comment type="catalytic activity">
    <reaction evidence="4">
        <text>a 14alpha-methyl steroid + 3 reduced [NADPH--hemoprotein reductase] + 3 O2 = a Delta(14) steroid + formate + 3 oxidized [NADPH--hemoprotein reductase] + 4 H2O + 4 H(+)</text>
        <dbReference type="Rhea" id="RHEA:54028"/>
        <dbReference type="Rhea" id="RHEA-COMP:11964"/>
        <dbReference type="Rhea" id="RHEA-COMP:11965"/>
        <dbReference type="ChEBI" id="CHEBI:15377"/>
        <dbReference type="ChEBI" id="CHEBI:15378"/>
        <dbReference type="ChEBI" id="CHEBI:15379"/>
        <dbReference type="ChEBI" id="CHEBI:15740"/>
        <dbReference type="ChEBI" id="CHEBI:57618"/>
        <dbReference type="ChEBI" id="CHEBI:58210"/>
        <dbReference type="ChEBI" id="CHEBI:138029"/>
        <dbReference type="ChEBI" id="CHEBI:138031"/>
        <dbReference type="EC" id="1.14.14.154"/>
    </reaction>
    <physiologicalReaction direction="left-to-right" evidence="4">
        <dbReference type="Rhea" id="RHEA:54029"/>
    </physiologicalReaction>
</comment>
<comment type="catalytic activity">
    <reaction evidence="2">
        <text>a 14alpha-methyl steroid + reduced [NADPH--hemoprotein reductase] + O2 = a 14alpha-hydroxymethyl steroid + oxidized [NADPH--hemoprotein reductase] + H2O + H(+)</text>
        <dbReference type="Rhea" id="RHEA:68060"/>
        <dbReference type="Rhea" id="RHEA-COMP:11964"/>
        <dbReference type="Rhea" id="RHEA-COMP:11965"/>
        <dbReference type="ChEBI" id="CHEBI:15377"/>
        <dbReference type="ChEBI" id="CHEBI:15378"/>
        <dbReference type="ChEBI" id="CHEBI:15379"/>
        <dbReference type="ChEBI" id="CHEBI:57618"/>
        <dbReference type="ChEBI" id="CHEBI:58210"/>
        <dbReference type="ChEBI" id="CHEBI:138029"/>
        <dbReference type="ChEBI" id="CHEBI:176901"/>
    </reaction>
    <physiologicalReaction direction="left-to-right" evidence="2">
        <dbReference type="Rhea" id="RHEA:68061"/>
    </physiologicalReaction>
</comment>
<comment type="catalytic activity">
    <reaction evidence="2">
        <text>a 14alpha-hydroxymethyl steroid + reduced [NADPH--hemoprotein reductase] + O2 = a 14alpha-formyl steroid + oxidized [NADPH--hemoprotein reductase] + 2 H2O + H(+)</text>
        <dbReference type="Rhea" id="RHEA:68064"/>
        <dbReference type="Rhea" id="RHEA-COMP:11964"/>
        <dbReference type="Rhea" id="RHEA-COMP:11965"/>
        <dbReference type="ChEBI" id="CHEBI:15377"/>
        <dbReference type="ChEBI" id="CHEBI:15378"/>
        <dbReference type="ChEBI" id="CHEBI:15379"/>
        <dbReference type="ChEBI" id="CHEBI:57618"/>
        <dbReference type="ChEBI" id="CHEBI:58210"/>
        <dbReference type="ChEBI" id="CHEBI:176901"/>
        <dbReference type="ChEBI" id="CHEBI:176902"/>
    </reaction>
    <physiologicalReaction direction="left-to-right" evidence="2">
        <dbReference type="Rhea" id="RHEA:68065"/>
    </physiologicalReaction>
</comment>
<comment type="catalytic activity">
    <reaction evidence="2">
        <text>a 14alpha-formyl steroid + reduced [NADPH--hemoprotein reductase] + O2 = a Delta(14) steroid + formate + oxidized [NADPH--hemoprotein reductase] + H2O + 2 H(+)</text>
        <dbReference type="Rhea" id="RHEA:68068"/>
        <dbReference type="Rhea" id="RHEA-COMP:11964"/>
        <dbReference type="Rhea" id="RHEA-COMP:11965"/>
        <dbReference type="ChEBI" id="CHEBI:15377"/>
        <dbReference type="ChEBI" id="CHEBI:15378"/>
        <dbReference type="ChEBI" id="CHEBI:15379"/>
        <dbReference type="ChEBI" id="CHEBI:15740"/>
        <dbReference type="ChEBI" id="CHEBI:57618"/>
        <dbReference type="ChEBI" id="CHEBI:58210"/>
        <dbReference type="ChEBI" id="CHEBI:138031"/>
        <dbReference type="ChEBI" id="CHEBI:176902"/>
    </reaction>
    <physiologicalReaction direction="left-to-right" evidence="2">
        <dbReference type="Rhea" id="RHEA:68069"/>
    </physiologicalReaction>
</comment>
<comment type="catalytic activity">
    <reaction evidence="4">
        <text>lanosterol + 3 reduced [NADPH--hemoprotein reductase] + 3 O2 = 4,4-dimethyl-5alpha-cholesta-8,14,24-trien-3beta-ol + formate + 3 oxidized [NADPH--hemoprotein reductase] + 4 H2O + 4 H(+)</text>
        <dbReference type="Rhea" id="RHEA:25286"/>
        <dbReference type="Rhea" id="RHEA-COMP:11964"/>
        <dbReference type="Rhea" id="RHEA-COMP:11965"/>
        <dbReference type="ChEBI" id="CHEBI:15377"/>
        <dbReference type="ChEBI" id="CHEBI:15378"/>
        <dbReference type="ChEBI" id="CHEBI:15379"/>
        <dbReference type="ChEBI" id="CHEBI:15740"/>
        <dbReference type="ChEBI" id="CHEBI:16521"/>
        <dbReference type="ChEBI" id="CHEBI:17813"/>
        <dbReference type="ChEBI" id="CHEBI:57618"/>
        <dbReference type="ChEBI" id="CHEBI:58210"/>
        <dbReference type="EC" id="1.14.14.154"/>
    </reaction>
    <physiologicalReaction direction="left-to-right" evidence="4">
        <dbReference type="Rhea" id="RHEA:25287"/>
    </physiologicalReaction>
</comment>
<comment type="catalytic activity">
    <reaction evidence="2">
        <text>lanosterol + reduced [NADPH--hemoprotein reductase] + O2 = 32-hydroxylanosterol + oxidized [NADPH--hemoprotein reductase] + H2O + H(+)</text>
        <dbReference type="Rhea" id="RHEA:75103"/>
        <dbReference type="Rhea" id="RHEA-COMP:11964"/>
        <dbReference type="Rhea" id="RHEA-COMP:11965"/>
        <dbReference type="ChEBI" id="CHEBI:15377"/>
        <dbReference type="ChEBI" id="CHEBI:15378"/>
        <dbReference type="ChEBI" id="CHEBI:15379"/>
        <dbReference type="ChEBI" id="CHEBI:16521"/>
        <dbReference type="ChEBI" id="CHEBI:57618"/>
        <dbReference type="ChEBI" id="CHEBI:58210"/>
        <dbReference type="ChEBI" id="CHEBI:166806"/>
    </reaction>
    <physiologicalReaction direction="left-to-right" evidence="2">
        <dbReference type="Rhea" id="RHEA:75104"/>
    </physiologicalReaction>
</comment>
<comment type="catalytic activity">
    <reaction evidence="2">
        <text>32-hydroxylanosterol + reduced [NADPH--hemoprotein reductase] + O2 = 32-oxolanosterol + oxidized [NADPH--hemoprotein reductase] + 2 H2O + H(+)</text>
        <dbReference type="Rhea" id="RHEA:75107"/>
        <dbReference type="Rhea" id="RHEA-COMP:11964"/>
        <dbReference type="Rhea" id="RHEA-COMP:11965"/>
        <dbReference type="ChEBI" id="CHEBI:15377"/>
        <dbReference type="ChEBI" id="CHEBI:15378"/>
        <dbReference type="ChEBI" id="CHEBI:15379"/>
        <dbReference type="ChEBI" id="CHEBI:57618"/>
        <dbReference type="ChEBI" id="CHEBI:58210"/>
        <dbReference type="ChEBI" id="CHEBI:166681"/>
        <dbReference type="ChEBI" id="CHEBI:166806"/>
    </reaction>
    <physiologicalReaction direction="left-to-right" evidence="2">
        <dbReference type="Rhea" id="RHEA:75108"/>
    </physiologicalReaction>
</comment>
<comment type="catalytic activity">
    <reaction evidence="2">
        <text>32-oxolanosterol + reduced [NADPH--hemoprotein reductase] + O2 = 4,4-dimethyl-5alpha-cholesta-8,14,24-trien-3beta-ol + formate + oxidized [NADPH--hemoprotein reductase] + H2O + 2 H(+)</text>
        <dbReference type="Rhea" id="RHEA:75111"/>
        <dbReference type="Rhea" id="RHEA-COMP:11964"/>
        <dbReference type="Rhea" id="RHEA-COMP:11965"/>
        <dbReference type="ChEBI" id="CHEBI:15377"/>
        <dbReference type="ChEBI" id="CHEBI:15378"/>
        <dbReference type="ChEBI" id="CHEBI:15379"/>
        <dbReference type="ChEBI" id="CHEBI:15740"/>
        <dbReference type="ChEBI" id="CHEBI:17813"/>
        <dbReference type="ChEBI" id="CHEBI:57618"/>
        <dbReference type="ChEBI" id="CHEBI:58210"/>
        <dbReference type="ChEBI" id="CHEBI:166681"/>
    </reaction>
    <physiologicalReaction direction="left-to-right" evidence="2">
        <dbReference type="Rhea" id="RHEA:75112"/>
    </physiologicalReaction>
</comment>
<comment type="catalytic activity">
    <reaction evidence="4">
        <text>eburicol + 3 reduced [NADPH--hemoprotein reductase] + 3 O2 = 14-demethyleburicol + formate + 3 oxidized [NADPH--hemoprotein reductase] + 4 H2O + 4 H(+)</text>
        <dbReference type="Rhea" id="RHEA:75439"/>
        <dbReference type="Rhea" id="RHEA-COMP:11964"/>
        <dbReference type="Rhea" id="RHEA-COMP:11965"/>
        <dbReference type="ChEBI" id="CHEBI:15377"/>
        <dbReference type="ChEBI" id="CHEBI:15378"/>
        <dbReference type="ChEBI" id="CHEBI:15379"/>
        <dbReference type="ChEBI" id="CHEBI:15740"/>
        <dbReference type="ChEBI" id="CHEBI:57618"/>
        <dbReference type="ChEBI" id="CHEBI:58210"/>
        <dbReference type="ChEBI" id="CHEBI:70315"/>
        <dbReference type="ChEBI" id="CHEBI:194330"/>
    </reaction>
    <physiologicalReaction direction="left-to-right" evidence="4">
        <dbReference type="Rhea" id="RHEA:75440"/>
    </physiologicalReaction>
</comment>
<comment type="catalytic activity">
    <reaction evidence="2">
        <text>eburicol + reduced [NADPH--hemoprotein reductase] + O2 = 32-hydroxyeburicol + oxidized [NADPH--hemoprotein reductase] + H2O + H(+)</text>
        <dbReference type="Rhea" id="RHEA:75427"/>
        <dbReference type="Rhea" id="RHEA-COMP:11964"/>
        <dbReference type="Rhea" id="RHEA-COMP:11965"/>
        <dbReference type="ChEBI" id="CHEBI:15377"/>
        <dbReference type="ChEBI" id="CHEBI:15378"/>
        <dbReference type="ChEBI" id="CHEBI:15379"/>
        <dbReference type="ChEBI" id="CHEBI:57618"/>
        <dbReference type="ChEBI" id="CHEBI:58210"/>
        <dbReference type="ChEBI" id="CHEBI:70315"/>
        <dbReference type="ChEBI" id="CHEBI:194328"/>
    </reaction>
    <physiologicalReaction direction="left-to-right" evidence="2">
        <dbReference type="Rhea" id="RHEA:75428"/>
    </physiologicalReaction>
</comment>
<comment type="catalytic activity">
    <reaction evidence="2">
        <text>32-hydroxyeburicol + reduced [NADPH--hemoprotein reductase] + O2 = 32-oxoeburicol + oxidized [NADPH--hemoprotein reductase] + 2 H2O + H(+)</text>
        <dbReference type="Rhea" id="RHEA:75431"/>
        <dbReference type="Rhea" id="RHEA-COMP:11964"/>
        <dbReference type="Rhea" id="RHEA-COMP:11965"/>
        <dbReference type="ChEBI" id="CHEBI:15377"/>
        <dbReference type="ChEBI" id="CHEBI:15378"/>
        <dbReference type="ChEBI" id="CHEBI:15379"/>
        <dbReference type="ChEBI" id="CHEBI:57618"/>
        <dbReference type="ChEBI" id="CHEBI:58210"/>
        <dbReference type="ChEBI" id="CHEBI:194328"/>
        <dbReference type="ChEBI" id="CHEBI:194329"/>
    </reaction>
    <physiologicalReaction direction="left-to-right" evidence="2">
        <dbReference type="Rhea" id="RHEA:75432"/>
    </physiologicalReaction>
</comment>
<comment type="catalytic activity">
    <reaction evidence="2">
        <text>32-oxoeburicol + reduced [NADPH--hemoprotein reductase] + O2 = 14-demethyleburicol + formate + oxidized [NADPH--hemoprotein reductase] + H2O + 2 H(+)</text>
        <dbReference type="Rhea" id="RHEA:75435"/>
        <dbReference type="Rhea" id="RHEA-COMP:11964"/>
        <dbReference type="Rhea" id="RHEA-COMP:11965"/>
        <dbReference type="ChEBI" id="CHEBI:15377"/>
        <dbReference type="ChEBI" id="CHEBI:15378"/>
        <dbReference type="ChEBI" id="CHEBI:15379"/>
        <dbReference type="ChEBI" id="CHEBI:15740"/>
        <dbReference type="ChEBI" id="CHEBI:57618"/>
        <dbReference type="ChEBI" id="CHEBI:58210"/>
        <dbReference type="ChEBI" id="CHEBI:194329"/>
        <dbReference type="ChEBI" id="CHEBI:194330"/>
    </reaction>
    <physiologicalReaction direction="left-to-right" evidence="2">
        <dbReference type="Rhea" id="RHEA:75436"/>
    </physiologicalReaction>
</comment>
<comment type="cofactor">
    <cofactor evidence="4">
        <name>heme</name>
        <dbReference type="ChEBI" id="CHEBI:30413"/>
    </cofactor>
</comment>
<comment type="pathway">
    <text evidence="4">Steroid biosynthesis; sterol biosynthesis.</text>
</comment>
<comment type="subcellular location">
    <subcellularLocation>
        <location evidence="10">Endoplasmic reticulum membrane</location>
        <topology evidence="5">Single-pass membrane protein</topology>
    </subcellularLocation>
</comment>
<comment type="induction">
    <text evidence="8">Over-expressed in azole-resistant clinical isolates.</text>
</comment>
<comment type="similarity">
    <text evidence="10">Belongs to the cytochrome P450 family.</text>
</comment>
<proteinExistence type="evidence at protein level"/>
<evidence type="ECO:0000250" key="1">
    <source>
        <dbReference type="UniProtKB" id="P10613"/>
    </source>
</evidence>
<evidence type="ECO:0000250" key="2">
    <source>
        <dbReference type="UniProtKB" id="P10614"/>
    </source>
</evidence>
<evidence type="ECO:0000250" key="3">
    <source>
        <dbReference type="UniProtKB" id="Q16850"/>
    </source>
</evidence>
<evidence type="ECO:0000250" key="4">
    <source>
        <dbReference type="UniProtKB" id="Q4WNT5"/>
    </source>
</evidence>
<evidence type="ECO:0000255" key="5"/>
<evidence type="ECO:0000255" key="6">
    <source>
        <dbReference type="PROSITE-ProRule" id="PRU00498"/>
    </source>
</evidence>
<evidence type="ECO:0000269" key="7">
    <source>
    </source>
</evidence>
<evidence type="ECO:0000269" key="8">
    <source>
    </source>
</evidence>
<evidence type="ECO:0000303" key="9">
    <source>
    </source>
</evidence>
<evidence type="ECO:0000305" key="10"/>
<evidence type="ECO:0000305" key="11">
    <source>
    </source>
</evidence>
<protein>
    <recommendedName>
        <fullName evidence="9">Sterol 14-alpha demethylase</fullName>
        <ecNumber evidence="11">1.14.14.154</ecNumber>
    </recommendedName>
    <alternativeName>
        <fullName evidence="9">Cytochrome P450 monooxygenase 51A</fullName>
    </alternativeName>
    <alternativeName>
        <fullName evidence="9">Ergosterol biosynthesis protein cyp51A</fullName>
    </alternativeName>
</protein>